<protein>
    <recommendedName>
        <fullName evidence="1">NADH-quinone oxidoreductase subunit B</fullName>
        <ecNumber evidence="1">7.1.1.-</ecNumber>
    </recommendedName>
    <alternativeName>
        <fullName evidence="1">NADH dehydrogenase I subunit B</fullName>
    </alternativeName>
    <alternativeName>
        <fullName evidence="1">NDH-1 subunit B</fullName>
    </alternativeName>
</protein>
<name>NUOB_BACCR</name>
<comment type="function">
    <text evidence="1">NDH-1 shuttles electrons from NADH, via FMN and iron-sulfur (Fe-S) centers, to quinones in the respiratory chain. The immediate electron acceptor for the enzyme in this species is believed to be a menaquinone. Couples the redox reaction to proton translocation (for every two electrons transferred, four hydrogen ions are translocated across the cytoplasmic membrane), and thus conserves the redox energy in a proton gradient.</text>
</comment>
<comment type="catalytic activity">
    <reaction evidence="1">
        <text>a quinone + NADH + 5 H(+)(in) = a quinol + NAD(+) + 4 H(+)(out)</text>
        <dbReference type="Rhea" id="RHEA:57888"/>
        <dbReference type="ChEBI" id="CHEBI:15378"/>
        <dbReference type="ChEBI" id="CHEBI:24646"/>
        <dbReference type="ChEBI" id="CHEBI:57540"/>
        <dbReference type="ChEBI" id="CHEBI:57945"/>
        <dbReference type="ChEBI" id="CHEBI:132124"/>
    </reaction>
</comment>
<comment type="cofactor">
    <cofactor evidence="1">
        <name>[4Fe-4S] cluster</name>
        <dbReference type="ChEBI" id="CHEBI:49883"/>
    </cofactor>
    <text evidence="1">Binds 1 [4Fe-4S] cluster.</text>
</comment>
<comment type="subunit">
    <text evidence="1">NDH-1 is composed of 14 different subunits. Subunits NuoB, C, D, E, F, and G constitute the peripheral sector of the complex.</text>
</comment>
<comment type="subcellular location">
    <subcellularLocation>
        <location evidence="1">Cell membrane</location>
        <topology evidence="1">Peripheral membrane protein</topology>
        <orientation evidence="1">Cytoplasmic side</orientation>
    </subcellularLocation>
</comment>
<comment type="similarity">
    <text evidence="1">Belongs to the complex I 20 kDa subunit family.</text>
</comment>
<sequence>MVINFEELHPNERAELERNIFFSTLEQLKGWARSNSLWPMTFGLACCAIEMMGVGSSHYDLDRFGSFFRTSPRQSDVMIVSGTVTKKMAPIVRRLYDQMPEPKWVIAMGSCATAGGPYVNSYAVVKGVDQIVPVDVYIPGCPPNPAALIYGINKLKEKIRYEAKTGKQVTNK</sequence>
<feature type="chain" id="PRO_0000376131" description="NADH-quinone oxidoreductase subunit B">
    <location>
        <begin position="1"/>
        <end position="172"/>
    </location>
</feature>
<feature type="binding site" evidence="1">
    <location>
        <position position="46"/>
    </location>
    <ligand>
        <name>[4Fe-4S] cluster</name>
        <dbReference type="ChEBI" id="CHEBI:49883"/>
    </ligand>
</feature>
<feature type="binding site" evidence="1">
    <location>
        <position position="47"/>
    </location>
    <ligand>
        <name>[4Fe-4S] cluster</name>
        <dbReference type="ChEBI" id="CHEBI:49883"/>
    </ligand>
</feature>
<feature type="binding site" evidence="1">
    <location>
        <position position="111"/>
    </location>
    <ligand>
        <name>[4Fe-4S] cluster</name>
        <dbReference type="ChEBI" id="CHEBI:49883"/>
    </ligand>
</feature>
<feature type="binding site" evidence="1">
    <location>
        <position position="141"/>
    </location>
    <ligand>
        <name>[4Fe-4S] cluster</name>
        <dbReference type="ChEBI" id="CHEBI:49883"/>
    </ligand>
</feature>
<organism>
    <name type="scientific">Bacillus cereus (strain ATCC 14579 / DSM 31 / CCUG 7414 / JCM 2152 / NBRC 15305 / NCIMB 9373 / NCTC 2599 / NRRL B-3711)</name>
    <dbReference type="NCBI Taxonomy" id="226900"/>
    <lineage>
        <taxon>Bacteria</taxon>
        <taxon>Bacillati</taxon>
        <taxon>Bacillota</taxon>
        <taxon>Bacilli</taxon>
        <taxon>Bacillales</taxon>
        <taxon>Bacillaceae</taxon>
        <taxon>Bacillus</taxon>
        <taxon>Bacillus cereus group</taxon>
    </lineage>
</organism>
<accession>Q814W7</accession>
<evidence type="ECO:0000255" key="1">
    <source>
        <dbReference type="HAMAP-Rule" id="MF_01356"/>
    </source>
</evidence>
<reference key="1">
    <citation type="journal article" date="2003" name="Nature">
        <title>Genome sequence of Bacillus cereus and comparative analysis with Bacillus anthracis.</title>
        <authorList>
            <person name="Ivanova N."/>
            <person name="Sorokin A."/>
            <person name="Anderson I."/>
            <person name="Galleron N."/>
            <person name="Candelon B."/>
            <person name="Kapatral V."/>
            <person name="Bhattacharyya A."/>
            <person name="Reznik G."/>
            <person name="Mikhailova N."/>
            <person name="Lapidus A."/>
            <person name="Chu L."/>
            <person name="Mazur M."/>
            <person name="Goltsman E."/>
            <person name="Larsen N."/>
            <person name="D'Souza M."/>
            <person name="Walunas T."/>
            <person name="Grechkin Y."/>
            <person name="Pusch G."/>
            <person name="Haselkorn R."/>
            <person name="Fonstein M."/>
            <person name="Ehrlich S.D."/>
            <person name="Overbeek R."/>
            <person name="Kyrpides N.C."/>
        </authorList>
    </citation>
    <scope>NUCLEOTIDE SEQUENCE [LARGE SCALE GENOMIC DNA]</scope>
    <source>
        <strain>ATCC 14579 / DSM 31 / CCUG 7414 / JCM 2152 / NBRC 15305 / NCIMB 9373 / NCTC 2599 / NRRL B-3711</strain>
    </source>
</reference>
<dbReference type="EC" id="7.1.1.-" evidence="1"/>
<dbReference type="EMBL" id="AE016877">
    <property type="protein sequence ID" value="AAP12164.1"/>
    <property type="molecule type" value="Genomic_DNA"/>
</dbReference>
<dbReference type="RefSeq" id="NP_834963.1">
    <property type="nucleotide sequence ID" value="NC_004722.1"/>
</dbReference>
<dbReference type="RefSeq" id="WP_000236331.1">
    <property type="nucleotide sequence ID" value="NZ_CP138336.1"/>
</dbReference>
<dbReference type="SMR" id="Q814W7"/>
<dbReference type="STRING" id="226900.BC_5300"/>
<dbReference type="GeneID" id="92803556"/>
<dbReference type="KEGG" id="bce:BC5300"/>
<dbReference type="PATRIC" id="fig|226900.8.peg.5471"/>
<dbReference type="HOGENOM" id="CLU_055737_7_3_9"/>
<dbReference type="OrthoDB" id="9786737at2"/>
<dbReference type="Proteomes" id="UP000001417">
    <property type="component" value="Chromosome"/>
</dbReference>
<dbReference type="GO" id="GO:0005886">
    <property type="term" value="C:plasma membrane"/>
    <property type="evidence" value="ECO:0007669"/>
    <property type="project" value="UniProtKB-SubCell"/>
</dbReference>
<dbReference type="GO" id="GO:0045271">
    <property type="term" value="C:respiratory chain complex I"/>
    <property type="evidence" value="ECO:0000318"/>
    <property type="project" value="GO_Central"/>
</dbReference>
<dbReference type="GO" id="GO:0051539">
    <property type="term" value="F:4 iron, 4 sulfur cluster binding"/>
    <property type="evidence" value="ECO:0007669"/>
    <property type="project" value="UniProtKB-KW"/>
</dbReference>
<dbReference type="GO" id="GO:0005506">
    <property type="term" value="F:iron ion binding"/>
    <property type="evidence" value="ECO:0007669"/>
    <property type="project" value="UniProtKB-UniRule"/>
</dbReference>
<dbReference type="GO" id="GO:0008137">
    <property type="term" value="F:NADH dehydrogenase (ubiquinone) activity"/>
    <property type="evidence" value="ECO:0000318"/>
    <property type="project" value="GO_Central"/>
</dbReference>
<dbReference type="GO" id="GO:0050136">
    <property type="term" value="F:NADH:ubiquinone reductase (non-electrogenic) activity"/>
    <property type="evidence" value="ECO:0007669"/>
    <property type="project" value="UniProtKB-UniRule"/>
</dbReference>
<dbReference type="GO" id="GO:0048038">
    <property type="term" value="F:quinone binding"/>
    <property type="evidence" value="ECO:0007669"/>
    <property type="project" value="UniProtKB-KW"/>
</dbReference>
<dbReference type="GO" id="GO:0009060">
    <property type="term" value="P:aerobic respiration"/>
    <property type="evidence" value="ECO:0000318"/>
    <property type="project" value="GO_Central"/>
</dbReference>
<dbReference type="GO" id="GO:0015990">
    <property type="term" value="P:electron transport coupled proton transport"/>
    <property type="evidence" value="ECO:0000318"/>
    <property type="project" value="GO_Central"/>
</dbReference>
<dbReference type="FunFam" id="3.40.50.12280:FF:000002">
    <property type="entry name" value="NADH-quinone oxidoreductase subunit B"/>
    <property type="match status" value="1"/>
</dbReference>
<dbReference type="Gene3D" id="3.40.50.12280">
    <property type="match status" value="1"/>
</dbReference>
<dbReference type="HAMAP" id="MF_01356">
    <property type="entry name" value="NDH1_NuoB"/>
    <property type="match status" value="1"/>
</dbReference>
<dbReference type="InterPro" id="IPR006137">
    <property type="entry name" value="NADH_UbQ_OxRdtase-like_20kDa"/>
</dbReference>
<dbReference type="InterPro" id="IPR006138">
    <property type="entry name" value="NADH_UQ_OxRdtase_20Kd_su"/>
</dbReference>
<dbReference type="NCBIfam" id="TIGR01957">
    <property type="entry name" value="nuoB_fam"/>
    <property type="match status" value="1"/>
</dbReference>
<dbReference type="NCBIfam" id="NF005012">
    <property type="entry name" value="PRK06411.1"/>
    <property type="match status" value="1"/>
</dbReference>
<dbReference type="PANTHER" id="PTHR11995">
    <property type="entry name" value="NADH DEHYDROGENASE"/>
    <property type="match status" value="1"/>
</dbReference>
<dbReference type="PANTHER" id="PTHR11995:SF14">
    <property type="entry name" value="NADH DEHYDROGENASE [UBIQUINONE] IRON-SULFUR PROTEIN 7, MITOCHONDRIAL"/>
    <property type="match status" value="1"/>
</dbReference>
<dbReference type="Pfam" id="PF01058">
    <property type="entry name" value="Oxidored_q6"/>
    <property type="match status" value="1"/>
</dbReference>
<dbReference type="SUPFAM" id="SSF56770">
    <property type="entry name" value="HydA/Nqo6-like"/>
    <property type="match status" value="1"/>
</dbReference>
<gene>
    <name evidence="1" type="primary">nuoB</name>
    <name type="ordered locus">BC_5300</name>
</gene>
<proteinExistence type="inferred from homology"/>
<keyword id="KW-0004">4Fe-4S</keyword>
<keyword id="KW-1003">Cell membrane</keyword>
<keyword id="KW-0408">Iron</keyword>
<keyword id="KW-0411">Iron-sulfur</keyword>
<keyword id="KW-0472">Membrane</keyword>
<keyword id="KW-0479">Metal-binding</keyword>
<keyword id="KW-0520">NAD</keyword>
<keyword id="KW-0874">Quinone</keyword>
<keyword id="KW-1185">Reference proteome</keyword>
<keyword id="KW-1278">Translocase</keyword>
<keyword id="KW-0813">Transport</keyword>